<sequence>MLAYPRIDPVAVSIGPLQFRWYGLMYLFGFISGWWLGRRRAAQPGSGWHPQQVDDMVTWAIFGVVLGGRLGYILFYDLAYYASQPAAIFQIWHGGMSFHGGLLGVLFAVWLYARRAEREFLSVVDFVAPLIPPGLFFGRIGNFINGELWGAPTTLPWAMVFPDGGPFPRHPSQLYEAVLEGVVLFAAVWWFSGRKRPVGAVSGLFGVLYAIFRFAVEFVREPDPQLGYLAFGWLTMGQVLCLPLFGVGMWLLLRNRGAAEGPAAR</sequence>
<name>LGT_NITV9</name>
<proteinExistence type="inferred from homology"/>
<keyword id="KW-0997">Cell inner membrane</keyword>
<keyword id="KW-1003">Cell membrane</keyword>
<keyword id="KW-0472">Membrane</keyword>
<keyword id="KW-0808">Transferase</keyword>
<keyword id="KW-0812">Transmembrane</keyword>
<keyword id="KW-1133">Transmembrane helix</keyword>
<evidence type="ECO:0000255" key="1">
    <source>
        <dbReference type="HAMAP-Rule" id="MF_01147"/>
    </source>
</evidence>
<protein>
    <recommendedName>
        <fullName evidence="1">Phosphatidylglycerol--prolipoprotein diacylglyceryl transferase</fullName>
        <ecNumber evidence="1">2.5.1.145</ecNumber>
    </recommendedName>
</protein>
<accession>B8DQF5</accession>
<feature type="chain" id="PRO_1000137419" description="Phosphatidylglycerol--prolipoprotein diacylglyceryl transferase">
    <location>
        <begin position="1"/>
        <end position="265"/>
    </location>
</feature>
<feature type="transmembrane region" description="Helical" evidence="1">
    <location>
        <begin position="11"/>
        <end position="31"/>
    </location>
</feature>
<feature type="transmembrane region" description="Helical" evidence="1">
    <location>
        <begin position="56"/>
        <end position="76"/>
    </location>
</feature>
<feature type="transmembrane region" description="Helical" evidence="1">
    <location>
        <begin position="91"/>
        <end position="111"/>
    </location>
</feature>
<feature type="transmembrane region" description="Helical" evidence="1">
    <location>
        <begin position="120"/>
        <end position="140"/>
    </location>
</feature>
<feature type="transmembrane region" description="Helical" evidence="1">
    <location>
        <begin position="173"/>
        <end position="193"/>
    </location>
</feature>
<feature type="transmembrane region" description="Helical" evidence="1">
    <location>
        <begin position="198"/>
        <end position="218"/>
    </location>
</feature>
<feature type="transmembrane region" description="Helical" evidence="1">
    <location>
        <begin position="233"/>
        <end position="253"/>
    </location>
</feature>
<feature type="binding site" evidence="1">
    <location>
        <position position="139"/>
    </location>
    <ligand>
        <name>a 1,2-diacyl-sn-glycero-3-phospho-(1'-sn-glycerol)</name>
        <dbReference type="ChEBI" id="CHEBI:64716"/>
    </ligand>
</feature>
<organism>
    <name type="scientific">Nitratidesulfovibrio vulgaris (strain DSM 19637 / Miyazaki F)</name>
    <name type="common">Desulfovibrio vulgaris</name>
    <dbReference type="NCBI Taxonomy" id="883"/>
    <lineage>
        <taxon>Bacteria</taxon>
        <taxon>Pseudomonadati</taxon>
        <taxon>Thermodesulfobacteriota</taxon>
        <taxon>Desulfovibrionia</taxon>
        <taxon>Desulfovibrionales</taxon>
        <taxon>Desulfovibrionaceae</taxon>
        <taxon>Nitratidesulfovibrio</taxon>
    </lineage>
</organism>
<reference key="1">
    <citation type="submission" date="2008-10" db="EMBL/GenBank/DDBJ databases">
        <title>Complete sequence of Desulfovibrio vulgaris str. 'Miyazaki F'.</title>
        <authorList>
            <person name="Lucas S."/>
            <person name="Copeland A."/>
            <person name="Lapidus A."/>
            <person name="Glavina del Rio T."/>
            <person name="Dalin E."/>
            <person name="Tice H."/>
            <person name="Bruce D."/>
            <person name="Goodwin L."/>
            <person name="Pitluck S."/>
            <person name="Sims D."/>
            <person name="Brettin T."/>
            <person name="Detter J.C."/>
            <person name="Han C."/>
            <person name="Larimer F."/>
            <person name="Land M."/>
            <person name="Hauser L."/>
            <person name="Kyrpides N."/>
            <person name="Mikhailova N."/>
            <person name="Hazen T.C."/>
            <person name="Richardson P."/>
        </authorList>
    </citation>
    <scope>NUCLEOTIDE SEQUENCE [LARGE SCALE GENOMIC DNA]</scope>
    <source>
        <strain>DSM 19637 / Miyazaki F</strain>
    </source>
</reference>
<dbReference type="EC" id="2.5.1.145" evidence="1"/>
<dbReference type="EMBL" id="CP001197">
    <property type="protein sequence ID" value="ACL09074.1"/>
    <property type="molecule type" value="Genomic_DNA"/>
</dbReference>
<dbReference type="SMR" id="B8DQF5"/>
<dbReference type="STRING" id="883.DvMF_2131"/>
<dbReference type="KEGG" id="dvm:DvMF_2131"/>
<dbReference type="eggNOG" id="COG0682">
    <property type="taxonomic scope" value="Bacteria"/>
</dbReference>
<dbReference type="HOGENOM" id="CLU_013386_1_0_7"/>
<dbReference type="OrthoDB" id="871140at2"/>
<dbReference type="UniPathway" id="UPA00664"/>
<dbReference type="GO" id="GO:0005886">
    <property type="term" value="C:plasma membrane"/>
    <property type="evidence" value="ECO:0007669"/>
    <property type="project" value="UniProtKB-SubCell"/>
</dbReference>
<dbReference type="GO" id="GO:0008961">
    <property type="term" value="F:phosphatidylglycerol-prolipoprotein diacylglyceryl transferase activity"/>
    <property type="evidence" value="ECO:0007669"/>
    <property type="project" value="UniProtKB-UniRule"/>
</dbReference>
<dbReference type="GO" id="GO:0042158">
    <property type="term" value="P:lipoprotein biosynthetic process"/>
    <property type="evidence" value="ECO:0007669"/>
    <property type="project" value="UniProtKB-UniRule"/>
</dbReference>
<dbReference type="HAMAP" id="MF_01147">
    <property type="entry name" value="Lgt"/>
    <property type="match status" value="1"/>
</dbReference>
<dbReference type="InterPro" id="IPR001640">
    <property type="entry name" value="Lgt"/>
</dbReference>
<dbReference type="NCBIfam" id="TIGR00544">
    <property type="entry name" value="lgt"/>
    <property type="match status" value="1"/>
</dbReference>
<dbReference type="PANTHER" id="PTHR30589:SF0">
    <property type="entry name" value="PHOSPHATIDYLGLYCEROL--PROLIPOPROTEIN DIACYLGLYCERYL TRANSFERASE"/>
    <property type="match status" value="1"/>
</dbReference>
<dbReference type="PANTHER" id="PTHR30589">
    <property type="entry name" value="PROLIPOPROTEIN DIACYLGLYCERYL TRANSFERASE"/>
    <property type="match status" value="1"/>
</dbReference>
<dbReference type="Pfam" id="PF01790">
    <property type="entry name" value="LGT"/>
    <property type="match status" value="1"/>
</dbReference>
<dbReference type="PROSITE" id="PS01311">
    <property type="entry name" value="LGT"/>
    <property type="match status" value="1"/>
</dbReference>
<comment type="function">
    <text evidence="1">Catalyzes the transfer of the diacylglyceryl group from phosphatidylglycerol to the sulfhydryl group of the N-terminal cysteine of a prolipoprotein, the first step in the formation of mature lipoproteins.</text>
</comment>
<comment type="catalytic activity">
    <reaction evidence="1">
        <text>L-cysteinyl-[prolipoprotein] + a 1,2-diacyl-sn-glycero-3-phospho-(1'-sn-glycerol) = an S-1,2-diacyl-sn-glyceryl-L-cysteinyl-[prolipoprotein] + sn-glycerol 1-phosphate + H(+)</text>
        <dbReference type="Rhea" id="RHEA:56712"/>
        <dbReference type="Rhea" id="RHEA-COMP:14679"/>
        <dbReference type="Rhea" id="RHEA-COMP:14680"/>
        <dbReference type="ChEBI" id="CHEBI:15378"/>
        <dbReference type="ChEBI" id="CHEBI:29950"/>
        <dbReference type="ChEBI" id="CHEBI:57685"/>
        <dbReference type="ChEBI" id="CHEBI:64716"/>
        <dbReference type="ChEBI" id="CHEBI:140658"/>
        <dbReference type="EC" id="2.5.1.145"/>
    </reaction>
</comment>
<comment type="pathway">
    <text evidence="1">Protein modification; lipoprotein biosynthesis (diacylglyceryl transfer).</text>
</comment>
<comment type="subcellular location">
    <subcellularLocation>
        <location evidence="1">Cell inner membrane</location>
        <topology evidence="1">Multi-pass membrane protein</topology>
    </subcellularLocation>
</comment>
<comment type="similarity">
    <text evidence="1">Belongs to the Lgt family.</text>
</comment>
<gene>
    <name evidence="1" type="primary">lgt</name>
    <name type="ordered locus">DvMF_2131</name>
</gene>